<feature type="chain" id="PRO_1000149754" description="UPF0266 membrane protein YobD">
    <location>
        <begin position="1"/>
        <end position="152"/>
    </location>
</feature>
<feature type="transmembrane region" description="Helical" evidence="1">
    <location>
        <begin position="6"/>
        <end position="26"/>
    </location>
</feature>
<feature type="transmembrane region" description="Helical" evidence="1">
    <location>
        <begin position="45"/>
        <end position="65"/>
    </location>
</feature>
<feature type="transmembrane region" description="Helical" evidence="1">
    <location>
        <begin position="67"/>
        <end position="87"/>
    </location>
</feature>
<protein>
    <recommendedName>
        <fullName evidence="1">UPF0266 membrane protein YobD</fullName>
    </recommendedName>
</protein>
<sequence>MTITDLVLILFIAALLAFAIYDQFIMPRRNGPTLLAIPLLRRGRIDSVIFVGLIVILIYNNVTNHGALITTWLLSALALMGFYIFWIRVPKIIFKQKGFFFANVWIEYSRIKAMNLSEDGVLVMQLEQRRLLIRVRNIDDLEKIYKLLVSTQ</sequence>
<name>YOBD_ECO55</name>
<evidence type="ECO:0000255" key="1">
    <source>
        <dbReference type="HAMAP-Rule" id="MF_01071"/>
    </source>
</evidence>
<keyword id="KW-0997">Cell inner membrane</keyword>
<keyword id="KW-1003">Cell membrane</keyword>
<keyword id="KW-0472">Membrane</keyword>
<keyword id="KW-1185">Reference proteome</keyword>
<keyword id="KW-0812">Transmembrane</keyword>
<keyword id="KW-1133">Transmembrane helix</keyword>
<accession>B7L6U8</accession>
<reference key="1">
    <citation type="journal article" date="2009" name="PLoS Genet.">
        <title>Organised genome dynamics in the Escherichia coli species results in highly diverse adaptive paths.</title>
        <authorList>
            <person name="Touchon M."/>
            <person name="Hoede C."/>
            <person name="Tenaillon O."/>
            <person name="Barbe V."/>
            <person name="Baeriswyl S."/>
            <person name="Bidet P."/>
            <person name="Bingen E."/>
            <person name="Bonacorsi S."/>
            <person name="Bouchier C."/>
            <person name="Bouvet O."/>
            <person name="Calteau A."/>
            <person name="Chiapello H."/>
            <person name="Clermont O."/>
            <person name="Cruveiller S."/>
            <person name="Danchin A."/>
            <person name="Diard M."/>
            <person name="Dossat C."/>
            <person name="Karoui M.E."/>
            <person name="Frapy E."/>
            <person name="Garry L."/>
            <person name="Ghigo J.M."/>
            <person name="Gilles A.M."/>
            <person name="Johnson J."/>
            <person name="Le Bouguenec C."/>
            <person name="Lescat M."/>
            <person name="Mangenot S."/>
            <person name="Martinez-Jehanne V."/>
            <person name="Matic I."/>
            <person name="Nassif X."/>
            <person name="Oztas S."/>
            <person name="Petit M.A."/>
            <person name="Pichon C."/>
            <person name="Rouy Z."/>
            <person name="Ruf C.S."/>
            <person name="Schneider D."/>
            <person name="Tourret J."/>
            <person name="Vacherie B."/>
            <person name="Vallenet D."/>
            <person name="Medigue C."/>
            <person name="Rocha E.P.C."/>
            <person name="Denamur E."/>
        </authorList>
    </citation>
    <scope>NUCLEOTIDE SEQUENCE [LARGE SCALE GENOMIC DNA]</scope>
    <source>
        <strain>55989 / EAEC</strain>
    </source>
</reference>
<organism>
    <name type="scientific">Escherichia coli (strain 55989 / EAEC)</name>
    <dbReference type="NCBI Taxonomy" id="585055"/>
    <lineage>
        <taxon>Bacteria</taxon>
        <taxon>Pseudomonadati</taxon>
        <taxon>Pseudomonadota</taxon>
        <taxon>Gammaproteobacteria</taxon>
        <taxon>Enterobacterales</taxon>
        <taxon>Enterobacteriaceae</taxon>
        <taxon>Escherichia</taxon>
    </lineage>
</organism>
<dbReference type="EMBL" id="CU928145">
    <property type="protein sequence ID" value="CAU97851.1"/>
    <property type="molecule type" value="Genomic_DNA"/>
</dbReference>
<dbReference type="RefSeq" id="WP_000156255.1">
    <property type="nucleotide sequence ID" value="NZ_CP028304.1"/>
</dbReference>
<dbReference type="KEGG" id="eck:EC55989_1993"/>
<dbReference type="HOGENOM" id="CLU_133645_0_0_6"/>
<dbReference type="Proteomes" id="UP000000746">
    <property type="component" value="Chromosome"/>
</dbReference>
<dbReference type="GO" id="GO:0005886">
    <property type="term" value="C:plasma membrane"/>
    <property type="evidence" value="ECO:0007669"/>
    <property type="project" value="UniProtKB-SubCell"/>
</dbReference>
<dbReference type="HAMAP" id="MF_01071">
    <property type="entry name" value="UPF0266"/>
    <property type="match status" value="1"/>
</dbReference>
<dbReference type="InterPro" id="IPR009328">
    <property type="entry name" value="DUF986"/>
</dbReference>
<dbReference type="NCBIfam" id="NF002791">
    <property type="entry name" value="PRK02913.1"/>
    <property type="match status" value="1"/>
</dbReference>
<dbReference type="Pfam" id="PF06173">
    <property type="entry name" value="DUF986"/>
    <property type="match status" value="1"/>
</dbReference>
<dbReference type="PIRSF" id="PIRSF020687">
    <property type="entry name" value="UCP020687"/>
    <property type="match status" value="1"/>
</dbReference>
<comment type="subcellular location">
    <subcellularLocation>
        <location evidence="1">Cell inner membrane</location>
        <topology evidence="1">Multi-pass membrane protein</topology>
    </subcellularLocation>
</comment>
<comment type="similarity">
    <text evidence="1">Belongs to the UPF0266 family.</text>
</comment>
<gene>
    <name evidence="1" type="primary">yobD</name>
    <name type="ordered locus">EC55989_1993</name>
</gene>
<proteinExistence type="inferred from homology"/>